<accession>C4LDX1</accession>
<keyword id="KW-0963">Cytoplasm</keyword>
<keyword id="KW-0274">FAD</keyword>
<keyword id="KW-0285">Flavoprotein</keyword>
<keyword id="KW-0520">NAD</keyword>
<keyword id="KW-1185">Reference proteome</keyword>
<keyword id="KW-0819">tRNA processing</keyword>
<organism>
    <name type="scientific">Tolumonas auensis (strain DSM 9187 / NBRC 110442 / TA 4)</name>
    <dbReference type="NCBI Taxonomy" id="595494"/>
    <lineage>
        <taxon>Bacteria</taxon>
        <taxon>Pseudomonadati</taxon>
        <taxon>Pseudomonadota</taxon>
        <taxon>Gammaproteobacteria</taxon>
        <taxon>Aeromonadales</taxon>
        <taxon>Aeromonadaceae</taxon>
        <taxon>Tolumonas</taxon>
    </lineage>
</organism>
<proteinExistence type="inferred from homology"/>
<dbReference type="EMBL" id="CP001616">
    <property type="protein sequence ID" value="ACQ94732.1"/>
    <property type="molecule type" value="Genomic_DNA"/>
</dbReference>
<dbReference type="RefSeq" id="WP_015880181.1">
    <property type="nucleotide sequence ID" value="NC_012691.1"/>
</dbReference>
<dbReference type="SMR" id="C4LDX1"/>
<dbReference type="STRING" id="595494.Tola_3144"/>
<dbReference type="KEGG" id="tau:Tola_3144"/>
<dbReference type="eggNOG" id="COG0445">
    <property type="taxonomic scope" value="Bacteria"/>
</dbReference>
<dbReference type="HOGENOM" id="CLU_007831_2_2_6"/>
<dbReference type="OrthoDB" id="9815560at2"/>
<dbReference type="Proteomes" id="UP000009073">
    <property type="component" value="Chromosome"/>
</dbReference>
<dbReference type="GO" id="GO:0005829">
    <property type="term" value="C:cytosol"/>
    <property type="evidence" value="ECO:0007669"/>
    <property type="project" value="TreeGrafter"/>
</dbReference>
<dbReference type="GO" id="GO:0050660">
    <property type="term" value="F:flavin adenine dinucleotide binding"/>
    <property type="evidence" value="ECO:0007669"/>
    <property type="project" value="UniProtKB-UniRule"/>
</dbReference>
<dbReference type="GO" id="GO:0030488">
    <property type="term" value="P:tRNA methylation"/>
    <property type="evidence" value="ECO:0007669"/>
    <property type="project" value="TreeGrafter"/>
</dbReference>
<dbReference type="GO" id="GO:0002098">
    <property type="term" value="P:tRNA wobble uridine modification"/>
    <property type="evidence" value="ECO:0007669"/>
    <property type="project" value="InterPro"/>
</dbReference>
<dbReference type="FunFam" id="1.10.10.1800:FF:000001">
    <property type="entry name" value="tRNA uridine 5-carboxymethylaminomethyl modification enzyme MnmG"/>
    <property type="match status" value="1"/>
</dbReference>
<dbReference type="FunFam" id="1.10.150.570:FF:000001">
    <property type="entry name" value="tRNA uridine 5-carboxymethylaminomethyl modification enzyme MnmG"/>
    <property type="match status" value="1"/>
</dbReference>
<dbReference type="FunFam" id="3.50.50.60:FF:000002">
    <property type="entry name" value="tRNA uridine 5-carboxymethylaminomethyl modification enzyme MnmG"/>
    <property type="match status" value="1"/>
</dbReference>
<dbReference type="FunFam" id="3.50.50.60:FF:000010">
    <property type="entry name" value="tRNA uridine 5-carboxymethylaminomethyl modification enzyme MnmG"/>
    <property type="match status" value="1"/>
</dbReference>
<dbReference type="Gene3D" id="3.50.50.60">
    <property type="entry name" value="FAD/NAD(P)-binding domain"/>
    <property type="match status" value="2"/>
</dbReference>
<dbReference type="Gene3D" id="1.10.150.570">
    <property type="entry name" value="GidA associated domain, C-terminal subdomain"/>
    <property type="match status" value="1"/>
</dbReference>
<dbReference type="Gene3D" id="1.10.10.1800">
    <property type="entry name" value="tRNA uridine 5-carboxymethylaminomethyl modification enzyme MnmG/GidA"/>
    <property type="match status" value="1"/>
</dbReference>
<dbReference type="HAMAP" id="MF_00129">
    <property type="entry name" value="MnmG_GidA"/>
    <property type="match status" value="1"/>
</dbReference>
<dbReference type="InterPro" id="IPR036188">
    <property type="entry name" value="FAD/NAD-bd_sf"/>
</dbReference>
<dbReference type="InterPro" id="IPR049312">
    <property type="entry name" value="GIDA_C_N"/>
</dbReference>
<dbReference type="InterPro" id="IPR004416">
    <property type="entry name" value="MnmG"/>
</dbReference>
<dbReference type="InterPro" id="IPR002218">
    <property type="entry name" value="MnmG-rel"/>
</dbReference>
<dbReference type="InterPro" id="IPR020595">
    <property type="entry name" value="MnmG-rel_CS"/>
</dbReference>
<dbReference type="InterPro" id="IPR026904">
    <property type="entry name" value="MnmG_C"/>
</dbReference>
<dbReference type="InterPro" id="IPR047001">
    <property type="entry name" value="MnmG_C_subdom"/>
</dbReference>
<dbReference type="InterPro" id="IPR044920">
    <property type="entry name" value="MnmG_C_subdom_sf"/>
</dbReference>
<dbReference type="InterPro" id="IPR040131">
    <property type="entry name" value="MnmG_N"/>
</dbReference>
<dbReference type="NCBIfam" id="TIGR00136">
    <property type="entry name" value="mnmG_gidA"/>
    <property type="match status" value="1"/>
</dbReference>
<dbReference type="PANTHER" id="PTHR11806">
    <property type="entry name" value="GLUCOSE INHIBITED DIVISION PROTEIN A"/>
    <property type="match status" value="1"/>
</dbReference>
<dbReference type="PANTHER" id="PTHR11806:SF0">
    <property type="entry name" value="PROTEIN MTO1 HOMOLOG, MITOCHONDRIAL"/>
    <property type="match status" value="1"/>
</dbReference>
<dbReference type="Pfam" id="PF01134">
    <property type="entry name" value="GIDA"/>
    <property type="match status" value="1"/>
</dbReference>
<dbReference type="Pfam" id="PF21680">
    <property type="entry name" value="GIDA_C_1st"/>
    <property type="match status" value="1"/>
</dbReference>
<dbReference type="Pfam" id="PF13932">
    <property type="entry name" value="SAM_GIDA_C"/>
    <property type="match status" value="1"/>
</dbReference>
<dbReference type="SMART" id="SM01228">
    <property type="entry name" value="GIDA_assoc_3"/>
    <property type="match status" value="1"/>
</dbReference>
<dbReference type="SUPFAM" id="SSF51905">
    <property type="entry name" value="FAD/NAD(P)-binding domain"/>
    <property type="match status" value="1"/>
</dbReference>
<dbReference type="PROSITE" id="PS01280">
    <property type="entry name" value="GIDA_1"/>
    <property type="match status" value="1"/>
</dbReference>
<dbReference type="PROSITE" id="PS01281">
    <property type="entry name" value="GIDA_2"/>
    <property type="match status" value="1"/>
</dbReference>
<gene>
    <name evidence="1" type="primary">mnmG</name>
    <name evidence="1" type="synonym">gidA</name>
    <name type="ordered locus">Tola_3144</name>
</gene>
<feature type="chain" id="PRO_1000203170" description="tRNA uridine 5-carboxymethylaminomethyl modification enzyme MnmG">
    <location>
        <begin position="1"/>
        <end position="629"/>
    </location>
</feature>
<feature type="binding site" evidence="1">
    <location>
        <begin position="13"/>
        <end position="18"/>
    </location>
    <ligand>
        <name>FAD</name>
        <dbReference type="ChEBI" id="CHEBI:57692"/>
    </ligand>
</feature>
<feature type="binding site" evidence="1">
    <location>
        <begin position="273"/>
        <end position="287"/>
    </location>
    <ligand>
        <name>NAD(+)</name>
        <dbReference type="ChEBI" id="CHEBI:57540"/>
    </ligand>
</feature>
<reference key="1">
    <citation type="submission" date="2009-05" db="EMBL/GenBank/DDBJ databases">
        <title>Complete sequence of Tolumonas auensis DSM 9187.</title>
        <authorList>
            <consortium name="US DOE Joint Genome Institute"/>
            <person name="Lucas S."/>
            <person name="Copeland A."/>
            <person name="Lapidus A."/>
            <person name="Glavina del Rio T."/>
            <person name="Tice H."/>
            <person name="Bruce D."/>
            <person name="Goodwin L."/>
            <person name="Pitluck S."/>
            <person name="Chertkov O."/>
            <person name="Brettin T."/>
            <person name="Detter J.C."/>
            <person name="Han C."/>
            <person name="Larimer F."/>
            <person name="Land M."/>
            <person name="Hauser L."/>
            <person name="Kyrpides N."/>
            <person name="Mikhailova N."/>
            <person name="Spring S."/>
            <person name="Beller H."/>
        </authorList>
    </citation>
    <scope>NUCLEOTIDE SEQUENCE [LARGE SCALE GENOMIC DNA]</scope>
    <source>
        <strain>DSM 9187 / NBRC 110442 / TA 4</strain>
    </source>
</reference>
<protein>
    <recommendedName>
        <fullName evidence="1">tRNA uridine 5-carboxymethylaminomethyl modification enzyme MnmG</fullName>
    </recommendedName>
    <alternativeName>
        <fullName evidence="1">Glucose-inhibited division protein A</fullName>
    </alternativeName>
</protein>
<sequence>MQYHDQFDVIVVGGGHAGTEAATAAARMGMKTLLLTHNIETLGHMSCNPAIGGIGKGHLVKEVDAMGGIMAQAIDHAGIQFRILNSSKGPAVRATRAQADRLLYKQTIRHTLENYPNLQLFQQACDDLILEGDRVCGVVTQAGIRILSKTVVLTAGTFLNGLIHIGMEHYRGGRSGDPASVTLAERMREMPLRVGRLKTGTPPRIDARSVDFSQLQMQLGDDPVPVFSYLGKPEQHPRQVPCFITHTNVQTHDVIRANLDRSPMYAGVIEGIGPRYCPSIEDKIMRFADKDAHQIFIEPEGLTTHELYPNGISTSLPFDVQVQIVRSMKGFANAHIARPGYAIEYDFFDPRDLKPNMENKCLQNLFFAGQINGTTGYEEAAAQGMLAGINAALRAQDKDPWAPRRDQAYIGVLMDDLSTLGTKEPYRMFTSRAEYRLLLREDNADLRLTPVGRELGLVNDERWAFFNHKLEMMAQEQQRLQDTWIQPQHPATEGLNKILKTPLSRPASLEDLLRRPEVNYQDLMAIEGVGPGIEHPQASEQIEIQVKYAGYIDRQQDEIDKQLRHEETLLPLDLDYSEVPGLSKEVCIKLNDTKPQTIGQASRISGVTPAAISILLVHLKKRGLLRKSA</sequence>
<comment type="function">
    <text evidence="1">NAD-binding protein involved in the addition of a carboxymethylaminomethyl (cmnm) group at the wobble position (U34) of certain tRNAs, forming tRNA-cmnm(5)s(2)U34.</text>
</comment>
<comment type="cofactor">
    <cofactor evidence="1">
        <name>FAD</name>
        <dbReference type="ChEBI" id="CHEBI:57692"/>
    </cofactor>
</comment>
<comment type="subunit">
    <text evidence="1">Homodimer. Heterotetramer of two MnmE and two MnmG subunits.</text>
</comment>
<comment type="subcellular location">
    <subcellularLocation>
        <location evidence="1">Cytoplasm</location>
    </subcellularLocation>
</comment>
<comment type="similarity">
    <text evidence="1">Belongs to the MnmG family.</text>
</comment>
<evidence type="ECO:0000255" key="1">
    <source>
        <dbReference type="HAMAP-Rule" id="MF_00129"/>
    </source>
</evidence>
<name>MNMG_TOLAT</name>